<dbReference type="EMBL" id="AB164619">
    <property type="protein sequence ID" value="BAD42448.1"/>
    <property type="molecule type" value="mRNA"/>
</dbReference>
<dbReference type="RefSeq" id="NP_001005257.1">
    <property type="nucleotide sequence ID" value="NM_001005257.1"/>
</dbReference>
<dbReference type="SMR" id="Q68A91"/>
<dbReference type="FunCoup" id="Q68A91">
    <property type="interactions" value="179"/>
</dbReference>
<dbReference type="STRING" id="9615.ENSCAFP00000031374"/>
<dbReference type="PaxDb" id="9612-ENSCAFP00000031374"/>
<dbReference type="GeneID" id="448795"/>
<dbReference type="KEGG" id="cfa:448795"/>
<dbReference type="CTD" id="56477"/>
<dbReference type="eggNOG" id="ENOG502SVUE">
    <property type="taxonomic scope" value="Eukaryota"/>
</dbReference>
<dbReference type="HOGENOM" id="CLU_2003113_0_0_1"/>
<dbReference type="InParanoid" id="Q68A91"/>
<dbReference type="OMA" id="ICVSPHS"/>
<dbReference type="OrthoDB" id="8905061at2759"/>
<dbReference type="TreeFam" id="TF337014"/>
<dbReference type="Proteomes" id="UP000002254">
    <property type="component" value="Unplaced"/>
</dbReference>
<dbReference type="Proteomes" id="UP000694429">
    <property type="component" value="Unplaced"/>
</dbReference>
<dbReference type="Proteomes" id="UP000694542">
    <property type="component" value="Unplaced"/>
</dbReference>
<dbReference type="Proteomes" id="UP000805418">
    <property type="component" value="Unplaced"/>
</dbReference>
<dbReference type="GO" id="GO:0005615">
    <property type="term" value="C:extracellular space"/>
    <property type="evidence" value="ECO:0000318"/>
    <property type="project" value="GO_Central"/>
</dbReference>
<dbReference type="GO" id="GO:0008009">
    <property type="term" value="F:chemokine activity"/>
    <property type="evidence" value="ECO:0000318"/>
    <property type="project" value="GO_Central"/>
</dbReference>
<dbReference type="GO" id="GO:0045236">
    <property type="term" value="F:CXCR chemokine receptor binding"/>
    <property type="evidence" value="ECO:0000318"/>
    <property type="project" value="GO_Central"/>
</dbReference>
<dbReference type="GO" id="GO:0061844">
    <property type="term" value="P:antimicrobial humoral immune response mediated by antimicrobial peptide"/>
    <property type="evidence" value="ECO:0000318"/>
    <property type="project" value="GO_Central"/>
</dbReference>
<dbReference type="GO" id="GO:0071222">
    <property type="term" value="P:cellular response to lipopolysaccharide"/>
    <property type="evidence" value="ECO:0000318"/>
    <property type="project" value="GO_Central"/>
</dbReference>
<dbReference type="GO" id="GO:0006954">
    <property type="term" value="P:inflammatory response"/>
    <property type="evidence" value="ECO:0000318"/>
    <property type="project" value="GO_Central"/>
</dbReference>
<dbReference type="GO" id="GO:0030593">
    <property type="term" value="P:neutrophil chemotaxis"/>
    <property type="evidence" value="ECO:0000318"/>
    <property type="project" value="GO_Central"/>
</dbReference>
<dbReference type="GO" id="GO:0001954">
    <property type="term" value="P:positive regulation of cell-matrix adhesion"/>
    <property type="evidence" value="ECO:0000318"/>
    <property type="project" value="GO_Central"/>
</dbReference>
<dbReference type="FunFam" id="2.40.50.40:FF:000019">
    <property type="entry name" value="C-C motif chemokine 27"/>
    <property type="match status" value="1"/>
</dbReference>
<dbReference type="Gene3D" id="2.40.50.40">
    <property type="match status" value="1"/>
</dbReference>
<dbReference type="InterPro" id="IPR000827">
    <property type="entry name" value="Chemokine_CC_CS"/>
</dbReference>
<dbReference type="InterPro" id="IPR001811">
    <property type="entry name" value="Chemokine_IL8-like_dom"/>
</dbReference>
<dbReference type="InterPro" id="IPR036048">
    <property type="entry name" value="Interleukin_8-like_sf"/>
</dbReference>
<dbReference type="Pfam" id="PF00048">
    <property type="entry name" value="IL8"/>
    <property type="match status" value="1"/>
</dbReference>
<dbReference type="SUPFAM" id="SSF54117">
    <property type="entry name" value="Interleukin 8-like chemokines"/>
    <property type="match status" value="1"/>
</dbReference>
<dbReference type="PROSITE" id="PS00472">
    <property type="entry name" value="SMALL_CYTOKINES_CC"/>
    <property type="match status" value="1"/>
</dbReference>
<protein>
    <recommendedName>
        <fullName>C-C motif chemokine 28</fullName>
    </recommendedName>
    <alternativeName>
        <fullName>Small-inducible cytokine A28</fullName>
    </alternativeName>
</protein>
<name>CCL28_CANLF</name>
<comment type="function">
    <text evidence="1">Chemotactic activity for resting CD4, CD8 T-cells and eosinophils. Binds to CCR3 and CCR10 and induces calcium mobilization in a dose-dependent manner (By similarity).</text>
</comment>
<comment type="subcellular location">
    <subcellularLocation>
        <location evidence="1">Secreted</location>
    </subcellularLocation>
</comment>
<comment type="similarity">
    <text evidence="4">Belongs to the intercrine beta (chemokine CC) family.</text>
</comment>
<feature type="signal peptide" evidence="2">
    <location>
        <begin position="1"/>
        <end position="24"/>
    </location>
</feature>
<feature type="chain" id="PRO_0000005241" description="C-C motif chemokine 28">
    <location>
        <begin position="25"/>
        <end position="128"/>
    </location>
</feature>
<feature type="region of interest" description="Disordered" evidence="3">
    <location>
        <begin position="89"/>
        <end position="128"/>
    </location>
</feature>
<feature type="compositionally biased region" description="Basic residues" evidence="3">
    <location>
        <begin position="94"/>
        <end position="113"/>
    </location>
</feature>
<feature type="compositionally biased region" description="Basic and acidic residues" evidence="3">
    <location>
        <begin position="114"/>
        <end position="128"/>
    </location>
</feature>
<feature type="disulfide bond" evidence="1">
    <location>
        <begin position="32"/>
        <end position="60"/>
    </location>
</feature>
<feature type="disulfide bond" evidence="1">
    <location>
        <begin position="33"/>
        <end position="75"/>
    </location>
</feature>
<proteinExistence type="evidence at transcript level"/>
<accession>Q68A91</accession>
<reference key="1">
    <citation type="submission" date="2004-03" db="EMBL/GenBank/DDBJ databases">
        <title>Expression analysis of gene in canine atopic dermatitis.</title>
        <authorList>
            <person name="Tsukui T."/>
            <person name="Sakaguchi M."/>
            <person name="Maeda S."/>
            <person name="Koyanagi M."/>
            <person name="Masuda K."/>
            <person name="Ohno K."/>
            <person name="Tsujimoto H."/>
            <person name="Iwabuchi S."/>
        </authorList>
    </citation>
    <scope>NUCLEOTIDE SEQUENCE [MRNA]</scope>
</reference>
<sequence length="128" mass="14258">MQQTGLTLALVALAVCVALPSSEAILPIASSCCTEVSHHISRRLLERVNICRIQRADGDCDLAAVILHVRRRRLCVSPHSHVIKQWMKEQAAKKNTKGNICHKKQAGKRKSKGAHQEKPEIHSHKSPY</sequence>
<evidence type="ECO:0000250" key="1"/>
<evidence type="ECO:0000255" key="2"/>
<evidence type="ECO:0000256" key="3">
    <source>
        <dbReference type="SAM" id="MobiDB-lite"/>
    </source>
</evidence>
<evidence type="ECO:0000305" key="4"/>
<organism>
    <name type="scientific">Canis lupus familiaris</name>
    <name type="common">Dog</name>
    <name type="synonym">Canis familiaris</name>
    <dbReference type="NCBI Taxonomy" id="9615"/>
    <lineage>
        <taxon>Eukaryota</taxon>
        <taxon>Metazoa</taxon>
        <taxon>Chordata</taxon>
        <taxon>Craniata</taxon>
        <taxon>Vertebrata</taxon>
        <taxon>Euteleostomi</taxon>
        <taxon>Mammalia</taxon>
        <taxon>Eutheria</taxon>
        <taxon>Laurasiatheria</taxon>
        <taxon>Carnivora</taxon>
        <taxon>Caniformia</taxon>
        <taxon>Canidae</taxon>
        <taxon>Canis</taxon>
    </lineage>
</organism>
<gene>
    <name type="primary">CCL28</name>
    <name type="synonym">SCYA28</name>
</gene>
<keyword id="KW-0145">Chemotaxis</keyword>
<keyword id="KW-0202">Cytokine</keyword>
<keyword id="KW-1015">Disulfide bond</keyword>
<keyword id="KW-1185">Reference proteome</keyword>
<keyword id="KW-0964">Secreted</keyword>
<keyword id="KW-0732">Signal</keyword>